<comment type="function">
    <text evidence="1">Catalyzes the attachment of alanine to tRNA(Ala) in a two-step reaction: alanine is first activated by ATP to form Ala-AMP and then transferred to the acceptor end of tRNA(Ala). Also edits incorrectly charged Ser-tRNA(Ala) and Gly-tRNA(Ala) via its editing domain.</text>
</comment>
<comment type="catalytic activity">
    <reaction evidence="1">
        <text>tRNA(Ala) + L-alanine + ATP = L-alanyl-tRNA(Ala) + AMP + diphosphate</text>
        <dbReference type="Rhea" id="RHEA:12540"/>
        <dbReference type="Rhea" id="RHEA-COMP:9657"/>
        <dbReference type="Rhea" id="RHEA-COMP:9923"/>
        <dbReference type="ChEBI" id="CHEBI:30616"/>
        <dbReference type="ChEBI" id="CHEBI:33019"/>
        <dbReference type="ChEBI" id="CHEBI:57972"/>
        <dbReference type="ChEBI" id="CHEBI:78442"/>
        <dbReference type="ChEBI" id="CHEBI:78497"/>
        <dbReference type="ChEBI" id="CHEBI:456215"/>
        <dbReference type="EC" id="6.1.1.7"/>
    </reaction>
</comment>
<comment type="cofactor">
    <cofactor evidence="1">
        <name>Zn(2+)</name>
        <dbReference type="ChEBI" id="CHEBI:29105"/>
    </cofactor>
    <text evidence="1">Binds 1 zinc ion per subunit.</text>
</comment>
<comment type="subcellular location">
    <subcellularLocation>
        <location evidence="1">Cytoplasm</location>
    </subcellularLocation>
</comment>
<comment type="domain">
    <text evidence="1">Consists of three domains; the N-terminal catalytic domain, the editing domain and the C-terminal C-Ala domain. The editing domain removes incorrectly charged amino acids, while the C-Ala domain, along with tRNA(Ala), serves as a bridge to cooperatively bring together the editing and aminoacylation centers thus stimulating deacylation of misacylated tRNAs.</text>
</comment>
<comment type="similarity">
    <text evidence="1">Belongs to the class-II aminoacyl-tRNA synthetase family.</text>
</comment>
<evidence type="ECO:0000255" key="1">
    <source>
        <dbReference type="HAMAP-Rule" id="MF_00036"/>
    </source>
</evidence>
<protein>
    <recommendedName>
        <fullName evidence="1">Alanine--tRNA ligase</fullName>
        <ecNumber evidence="1">6.1.1.7</ecNumber>
    </recommendedName>
    <alternativeName>
        <fullName evidence="1">Alanyl-tRNA synthetase</fullName>
        <shortName evidence="1">AlaRS</shortName>
    </alternativeName>
</protein>
<feature type="chain" id="PRO_0000075263" description="Alanine--tRNA ligase">
    <location>
        <begin position="1"/>
        <end position="925"/>
    </location>
</feature>
<feature type="binding site" evidence="1">
    <location>
        <position position="611"/>
    </location>
    <ligand>
        <name>Zn(2+)</name>
        <dbReference type="ChEBI" id="CHEBI:29105"/>
    </ligand>
</feature>
<feature type="binding site" evidence="1">
    <location>
        <position position="615"/>
    </location>
    <ligand>
        <name>Zn(2+)</name>
        <dbReference type="ChEBI" id="CHEBI:29105"/>
    </ligand>
</feature>
<feature type="binding site" evidence="1">
    <location>
        <position position="714"/>
    </location>
    <ligand>
        <name>Zn(2+)</name>
        <dbReference type="ChEBI" id="CHEBI:29105"/>
    </ligand>
</feature>
<feature type="binding site" evidence="1">
    <location>
        <position position="718"/>
    </location>
    <ligand>
        <name>Zn(2+)</name>
        <dbReference type="ChEBI" id="CHEBI:29105"/>
    </ligand>
</feature>
<dbReference type="EC" id="6.1.1.7" evidence="1"/>
<dbReference type="EMBL" id="AE010299">
    <property type="protein sequence ID" value="AAM03647.1"/>
    <property type="molecule type" value="Genomic_DNA"/>
</dbReference>
<dbReference type="RefSeq" id="WP_011020252.1">
    <property type="nucleotide sequence ID" value="NC_003552.1"/>
</dbReference>
<dbReference type="SMR" id="Q8TU79"/>
<dbReference type="FunCoup" id="Q8TU79">
    <property type="interactions" value="187"/>
</dbReference>
<dbReference type="STRING" id="188937.MA_0194"/>
<dbReference type="EnsemblBacteria" id="AAM03647">
    <property type="protein sequence ID" value="AAM03647"/>
    <property type="gene ID" value="MA_0194"/>
</dbReference>
<dbReference type="GeneID" id="1472086"/>
<dbReference type="KEGG" id="mac:MA_0194"/>
<dbReference type="HOGENOM" id="CLU_004485_4_0_2"/>
<dbReference type="InParanoid" id="Q8TU79"/>
<dbReference type="OrthoDB" id="7506at2157"/>
<dbReference type="PhylomeDB" id="Q8TU79"/>
<dbReference type="Proteomes" id="UP000002487">
    <property type="component" value="Chromosome"/>
</dbReference>
<dbReference type="GO" id="GO:0005737">
    <property type="term" value="C:cytoplasm"/>
    <property type="evidence" value="ECO:0007669"/>
    <property type="project" value="UniProtKB-SubCell"/>
</dbReference>
<dbReference type="GO" id="GO:0004813">
    <property type="term" value="F:alanine-tRNA ligase activity"/>
    <property type="evidence" value="ECO:0000318"/>
    <property type="project" value="GO_Central"/>
</dbReference>
<dbReference type="GO" id="GO:0002161">
    <property type="term" value="F:aminoacyl-tRNA deacylase activity"/>
    <property type="evidence" value="ECO:0000318"/>
    <property type="project" value="GO_Central"/>
</dbReference>
<dbReference type="GO" id="GO:0005524">
    <property type="term" value="F:ATP binding"/>
    <property type="evidence" value="ECO:0007669"/>
    <property type="project" value="UniProtKB-UniRule"/>
</dbReference>
<dbReference type="GO" id="GO:0000049">
    <property type="term" value="F:tRNA binding"/>
    <property type="evidence" value="ECO:0007669"/>
    <property type="project" value="UniProtKB-KW"/>
</dbReference>
<dbReference type="GO" id="GO:0008270">
    <property type="term" value="F:zinc ion binding"/>
    <property type="evidence" value="ECO:0007669"/>
    <property type="project" value="UniProtKB-UniRule"/>
</dbReference>
<dbReference type="GO" id="GO:0006419">
    <property type="term" value="P:alanyl-tRNA aminoacylation"/>
    <property type="evidence" value="ECO:0000318"/>
    <property type="project" value="GO_Central"/>
</dbReference>
<dbReference type="CDD" id="cd00673">
    <property type="entry name" value="AlaRS_core"/>
    <property type="match status" value="1"/>
</dbReference>
<dbReference type="FunFam" id="2.40.30.130:FF:000028">
    <property type="entry name" value="Alanine--tRNA ligase"/>
    <property type="match status" value="1"/>
</dbReference>
<dbReference type="FunFam" id="3.10.310.40:FF:000001">
    <property type="entry name" value="Alanine--tRNA ligase"/>
    <property type="match status" value="1"/>
</dbReference>
<dbReference type="FunFam" id="3.30.54.20:FF:000005">
    <property type="entry name" value="Alanine--tRNA ligase"/>
    <property type="match status" value="1"/>
</dbReference>
<dbReference type="FunFam" id="3.30.930.10:FF:000056">
    <property type="entry name" value="Alanine--tRNA ligase"/>
    <property type="match status" value="1"/>
</dbReference>
<dbReference type="FunFam" id="3.30.980.10:FF:000004">
    <property type="entry name" value="Alanine--tRNA ligase, cytoplasmic"/>
    <property type="match status" value="1"/>
</dbReference>
<dbReference type="Gene3D" id="2.40.30.130">
    <property type="match status" value="1"/>
</dbReference>
<dbReference type="Gene3D" id="3.10.310.40">
    <property type="match status" value="1"/>
</dbReference>
<dbReference type="Gene3D" id="3.30.54.20">
    <property type="match status" value="1"/>
</dbReference>
<dbReference type="Gene3D" id="6.10.250.550">
    <property type="match status" value="1"/>
</dbReference>
<dbReference type="Gene3D" id="3.30.930.10">
    <property type="entry name" value="Bira Bifunctional Protein, Domain 2"/>
    <property type="match status" value="1"/>
</dbReference>
<dbReference type="Gene3D" id="3.30.980.10">
    <property type="entry name" value="Threonyl-trna Synthetase, Chain A, domain 2"/>
    <property type="match status" value="1"/>
</dbReference>
<dbReference type="HAMAP" id="MF_00036_A">
    <property type="entry name" value="Ala_tRNA_synth_A"/>
    <property type="match status" value="1"/>
</dbReference>
<dbReference type="InterPro" id="IPR045864">
    <property type="entry name" value="aa-tRNA-synth_II/BPL/LPL"/>
</dbReference>
<dbReference type="InterPro" id="IPR002318">
    <property type="entry name" value="Ala-tRNA-lgiase_IIc"/>
</dbReference>
<dbReference type="InterPro" id="IPR018162">
    <property type="entry name" value="Ala-tRNA-ligase_IIc_anticod-bd"/>
</dbReference>
<dbReference type="InterPro" id="IPR018165">
    <property type="entry name" value="Ala-tRNA-synth_IIc_core"/>
</dbReference>
<dbReference type="InterPro" id="IPR018164">
    <property type="entry name" value="Ala-tRNA-synth_IIc_N"/>
</dbReference>
<dbReference type="InterPro" id="IPR022429">
    <property type="entry name" value="Ala-tRNA_lgiase_arc"/>
</dbReference>
<dbReference type="InterPro" id="IPR050058">
    <property type="entry name" value="Ala-tRNA_ligase"/>
</dbReference>
<dbReference type="InterPro" id="IPR003156">
    <property type="entry name" value="DHHA1_dom"/>
</dbReference>
<dbReference type="InterPro" id="IPR018163">
    <property type="entry name" value="Thr/Ala-tRNA-synth_IIc_edit"/>
</dbReference>
<dbReference type="InterPro" id="IPR009000">
    <property type="entry name" value="Transl_B-barrel_sf"/>
</dbReference>
<dbReference type="InterPro" id="IPR012947">
    <property type="entry name" value="tRNA_SAD"/>
</dbReference>
<dbReference type="NCBIfam" id="TIGR03683">
    <property type="entry name" value="A-tRNA_syn_arch"/>
    <property type="match status" value="1"/>
</dbReference>
<dbReference type="NCBIfam" id="TIGR00344">
    <property type="entry name" value="alaS"/>
    <property type="match status" value="1"/>
</dbReference>
<dbReference type="PANTHER" id="PTHR11777:SF9">
    <property type="entry name" value="ALANINE--TRNA LIGASE, CYTOPLASMIC"/>
    <property type="match status" value="1"/>
</dbReference>
<dbReference type="PANTHER" id="PTHR11777">
    <property type="entry name" value="ALANYL-TRNA SYNTHETASE"/>
    <property type="match status" value="1"/>
</dbReference>
<dbReference type="Pfam" id="PF02272">
    <property type="entry name" value="DHHA1"/>
    <property type="match status" value="1"/>
</dbReference>
<dbReference type="Pfam" id="PF01411">
    <property type="entry name" value="tRNA-synt_2c"/>
    <property type="match status" value="1"/>
</dbReference>
<dbReference type="Pfam" id="PF07973">
    <property type="entry name" value="tRNA_SAD"/>
    <property type="match status" value="1"/>
</dbReference>
<dbReference type="PRINTS" id="PR00980">
    <property type="entry name" value="TRNASYNTHALA"/>
</dbReference>
<dbReference type="SMART" id="SM00863">
    <property type="entry name" value="tRNA_SAD"/>
    <property type="match status" value="1"/>
</dbReference>
<dbReference type="SUPFAM" id="SSF55681">
    <property type="entry name" value="Class II aaRS and biotin synthetases"/>
    <property type="match status" value="1"/>
</dbReference>
<dbReference type="SUPFAM" id="SSF101353">
    <property type="entry name" value="Putative anticodon-binding domain of alanyl-tRNA synthetase (AlaRS)"/>
    <property type="match status" value="1"/>
</dbReference>
<dbReference type="SUPFAM" id="SSF55186">
    <property type="entry name" value="ThrRS/AlaRS common domain"/>
    <property type="match status" value="1"/>
</dbReference>
<dbReference type="SUPFAM" id="SSF50447">
    <property type="entry name" value="Translation proteins"/>
    <property type="match status" value="1"/>
</dbReference>
<dbReference type="PROSITE" id="PS50860">
    <property type="entry name" value="AA_TRNA_LIGASE_II_ALA"/>
    <property type="match status" value="1"/>
</dbReference>
<organism>
    <name type="scientific">Methanosarcina acetivorans (strain ATCC 35395 / DSM 2834 / JCM 12185 / C2A)</name>
    <dbReference type="NCBI Taxonomy" id="188937"/>
    <lineage>
        <taxon>Archaea</taxon>
        <taxon>Methanobacteriati</taxon>
        <taxon>Methanobacteriota</taxon>
        <taxon>Stenosarchaea group</taxon>
        <taxon>Methanomicrobia</taxon>
        <taxon>Methanosarcinales</taxon>
        <taxon>Methanosarcinaceae</taxon>
        <taxon>Methanosarcina</taxon>
    </lineage>
</organism>
<name>SYA_METAC</name>
<keyword id="KW-0030">Aminoacyl-tRNA synthetase</keyword>
<keyword id="KW-0067">ATP-binding</keyword>
<keyword id="KW-0963">Cytoplasm</keyword>
<keyword id="KW-0436">Ligase</keyword>
<keyword id="KW-0479">Metal-binding</keyword>
<keyword id="KW-0547">Nucleotide-binding</keyword>
<keyword id="KW-0648">Protein biosynthesis</keyword>
<keyword id="KW-1185">Reference proteome</keyword>
<keyword id="KW-0694">RNA-binding</keyword>
<keyword id="KW-0820">tRNA-binding</keyword>
<keyword id="KW-0862">Zinc</keyword>
<gene>
    <name evidence="1" type="primary">alaS</name>
    <name type="ordered locus">MA_0194</name>
</gene>
<accession>Q8TU79</accession>
<sequence length="925" mass="103654">MLEDEYQLDFFKNNGFVRKQCQKCGKFFWTRDPERNTCGDAPCDPYSFIGSPVFSREFNISEMREYYLSFFEARGHTRLDRYPVVARWRDDIYLTIASIADFQPFVTSGQVPPPANPLTISQPCIRLNDLDSVGRSGRHLTNFEMMAHHAFNKRGNEIYWKEHTLELCDELLTSLKVDPFAVTYKEEPWAGGGNAGPCVEVIVHGLELATLVFMDLKTDKKGDILIKGETYSKMDNYIVDTGYGLERFVWASKGSPTIYDALFPGIVNELMGLAGLEHELNNTEYSNILAQNARLAGFMDVSEKANLLELRKKVASSIGMTVDKLSVIMEPVEKVYAITDHTRCLTFMLGDGIIPSNVKAGYLARLVLRRTLRMMKDLDIRTPLSEIVDMHIRNMPEYPEFRANFPVIQDILESEEEKFNITMERGRRIIQKSASHFKKTGEKIPLSQLTELYDSHGIPPEMAKEVAADIGVGVEFPDNFYSIIGELHNKAEEKEEEVIPFAERLKHLPKTKRRFYDEPTRLEFEAVVLDVFDNHIVLDNTFFYAEGGGQPADIGTISVGDIVYKVVDVQVYEGVIVHTVDIPDGELEITKGDIITGKVDERRRMTLARHHTATHIVNDAARKVLGKHIWQAGAQKFEDHSRLDLSHYKHISPEELKQIELLANRTVMENKRVITEWMPRIEAEQVYGFGLYQGGVPPGEKIRIVKVGDDVEACGGTHCLSTGVIGPIKILKTERIQDGVERVEFAAGIAAVRAMQKMESLLVDSAKTLSVPPEHLPVSVERFFGEWKDLKKENERLKEDLARSRVYRMLGDASELAGLRVVSEQVPGADSLELQKIATELLKQENVVTLLASDLEGVKLVASVGEKAIECGINAGNLVREMSKIVGGGGGGKPALAMGGGTDPTRIQDALSRGLELVKEACKEA</sequence>
<reference key="1">
    <citation type="journal article" date="2002" name="Genome Res.">
        <title>The genome of Methanosarcina acetivorans reveals extensive metabolic and physiological diversity.</title>
        <authorList>
            <person name="Galagan J.E."/>
            <person name="Nusbaum C."/>
            <person name="Roy A."/>
            <person name="Endrizzi M.G."/>
            <person name="Macdonald P."/>
            <person name="FitzHugh W."/>
            <person name="Calvo S."/>
            <person name="Engels R."/>
            <person name="Smirnov S."/>
            <person name="Atnoor D."/>
            <person name="Brown A."/>
            <person name="Allen N."/>
            <person name="Naylor J."/>
            <person name="Stange-Thomann N."/>
            <person name="DeArellano K."/>
            <person name="Johnson R."/>
            <person name="Linton L."/>
            <person name="McEwan P."/>
            <person name="McKernan K."/>
            <person name="Talamas J."/>
            <person name="Tirrell A."/>
            <person name="Ye W."/>
            <person name="Zimmer A."/>
            <person name="Barber R.D."/>
            <person name="Cann I."/>
            <person name="Graham D.E."/>
            <person name="Grahame D.A."/>
            <person name="Guss A.M."/>
            <person name="Hedderich R."/>
            <person name="Ingram-Smith C."/>
            <person name="Kuettner H.C."/>
            <person name="Krzycki J.A."/>
            <person name="Leigh J.A."/>
            <person name="Li W."/>
            <person name="Liu J."/>
            <person name="Mukhopadhyay B."/>
            <person name="Reeve J.N."/>
            <person name="Smith K."/>
            <person name="Springer T.A."/>
            <person name="Umayam L.A."/>
            <person name="White O."/>
            <person name="White R.H."/>
            <person name="de Macario E.C."/>
            <person name="Ferry J.G."/>
            <person name="Jarrell K.F."/>
            <person name="Jing H."/>
            <person name="Macario A.J.L."/>
            <person name="Paulsen I.T."/>
            <person name="Pritchett M."/>
            <person name="Sowers K.R."/>
            <person name="Swanson R.V."/>
            <person name="Zinder S.H."/>
            <person name="Lander E."/>
            <person name="Metcalf W.W."/>
            <person name="Birren B."/>
        </authorList>
    </citation>
    <scope>NUCLEOTIDE SEQUENCE [LARGE SCALE GENOMIC DNA]</scope>
    <source>
        <strain>ATCC 35395 / DSM 2834 / JCM 12185 / C2A</strain>
    </source>
</reference>
<proteinExistence type="inferred from homology"/>